<sequence length="378" mass="40999">MTYRPATDPPDLDTLTLGVEEEFLLLDSDTGESMPVAARVLDGLSGTAYEQSRREFRHSMVEMVTPVVSDLAELRRHLVALRTAAAEAAESAGAHLVAVGATPVNETHRTVPDEPRYHAMSRRFGPVAHDPAVCGCHVHVGLPDRELAVQVCNHLRPWLPVVQAITANSPLHDGQDTGHASWRAMQLERWPSIGPTPYFDSAADYDATVADLIKAGIMLDAGMVYWYVRPSAAFPTVEIRVGDVCPTVDDTVLVAALVRALVATLAADVRDGARATRIRGCLVSAAHWRAAHDGLDGDLVDLRTGHARPAWDLVDELFALVAPALERQGDRAYVLDQLARLRDEGTGAARQRRILERTGCDVRAVLAHLAAQTRPVPA</sequence>
<organism>
    <name type="scientific">Salinispora tropica (strain ATCC BAA-916 / DSM 44818 / JCM 13857 / NBRC 105044 / CNB-440)</name>
    <dbReference type="NCBI Taxonomy" id="369723"/>
    <lineage>
        <taxon>Bacteria</taxon>
        <taxon>Bacillati</taxon>
        <taxon>Actinomycetota</taxon>
        <taxon>Actinomycetes</taxon>
        <taxon>Micromonosporales</taxon>
        <taxon>Micromonosporaceae</taxon>
        <taxon>Salinispora</taxon>
    </lineage>
</organism>
<proteinExistence type="inferred from homology"/>
<comment type="function">
    <text evidence="1">ATP-dependent carboxylate-amine ligase which exhibits weak glutamate--cysteine ligase activity.</text>
</comment>
<comment type="catalytic activity">
    <reaction evidence="1">
        <text>L-cysteine + L-glutamate + ATP = gamma-L-glutamyl-L-cysteine + ADP + phosphate + H(+)</text>
        <dbReference type="Rhea" id="RHEA:13285"/>
        <dbReference type="ChEBI" id="CHEBI:15378"/>
        <dbReference type="ChEBI" id="CHEBI:29985"/>
        <dbReference type="ChEBI" id="CHEBI:30616"/>
        <dbReference type="ChEBI" id="CHEBI:35235"/>
        <dbReference type="ChEBI" id="CHEBI:43474"/>
        <dbReference type="ChEBI" id="CHEBI:58173"/>
        <dbReference type="ChEBI" id="CHEBI:456216"/>
        <dbReference type="EC" id="6.3.2.2"/>
    </reaction>
</comment>
<comment type="similarity">
    <text evidence="1">Belongs to the glutamate--cysteine ligase type 2 family. YbdK subfamily.</text>
</comment>
<reference key="1">
    <citation type="journal article" date="2007" name="Proc. Natl. Acad. Sci. U.S.A.">
        <title>Genome sequencing reveals complex secondary metabolome in the marine actinomycete Salinispora tropica.</title>
        <authorList>
            <person name="Udwary D.W."/>
            <person name="Zeigler L."/>
            <person name="Asolkar R.N."/>
            <person name="Singan V."/>
            <person name="Lapidus A."/>
            <person name="Fenical W."/>
            <person name="Jensen P.R."/>
            <person name="Moore B.S."/>
        </authorList>
    </citation>
    <scope>NUCLEOTIDE SEQUENCE [LARGE SCALE GENOMIC DNA]</scope>
    <source>
        <strain>ATCC BAA-916 / DSM 44818 / JCM 13857 / NBRC 105044 / CNB-440</strain>
    </source>
</reference>
<gene>
    <name type="ordered locus">Strop_2542</name>
</gene>
<evidence type="ECO:0000255" key="1">
    <source>
        <dbReference type="HAMAP-Rule" id="MF_01609"/>
    </source>
</evidence>
<name>GCS2_SALTO</name>
<protein>
    <recommendedName>
        <fullName evidence="1">Putative glutamate--cysteine ligase 2</fullName>
        <ecNumber evidence="1">6.3.2.2</ecNumber>
    </recommendedName>
    <alternativeName>
        <fullName evidence="1">Gamma-glutamylcysteine synthetase 2</fullName>
        <shortName evidence="1">GCS 2</shortName>
        <shortName evidence="1">Gamma-GCS 2</shortName>
    </alternativeName>
</protein>
<accession>A4X7Y6</accession>
<feature type="chain" id="PRO_0000337704" description="Putative glutamate--cysteine ligase 2">
    <location>
        <begin position="1"/>
        <end position="378"/>
    </location>
</feature>
<keyword id="KW-0067">ATP-binding</keyword>
<keyword id="KW-0436">Ligase</keyword>
<keyword id="KW-0547">Nucleotide-binding</keyword>
<keyword id="KW-1185">Reference proteome</keyword>
<dbReference type="EC" id="6.3.2.2" evidence="1"/>
<dbReference type="EMBL" id="CP000667">
    <property type="protein sequence ID" value="ABP54986.1"/>
    <property type="molecule type" value="Genomic_DNA"/>
</dbReference>
<dbReference type="RefSeq" id="WP_012013767.1">
    <property type="nucleotide sequence ID" value="NC_009380.1"/>
</dbReference>
<dbReference type="SMR" id="A4X7Y6"/>
<dbReference type="STRING" id="369723.Strop_2542"/>
<dbReference type="KEGG" id="stp:Strop_2542"/>
<dbReference type="PATRIC" id="fig|369723.5.peg.2618"/>
<dbReference type="eggNOG" id="COG2170">
    <property type="taxonomic scope" value="Bacteria"/>
</dbReference>
<dbReference type="HOGENOM" id="CLU_044848_0_0_11"/>
<dbReference type="Proteomes" id="UP000000235">
    <property type="component" value="Chromosome"/>
</dbReference>
<dbReference type="GO" id="GO:0005524">
    <property type="term" value="F:ATP binding"/>
    <property type="evidence" value="ECO:0007669"/>
    <property type="project" value="UniProtKB-KW"/>
</dbReference>
<dbReference type="GO" id="GO:0004357">
    <property type="term" value="F:glutamate-cysteine ligase activity"/>
    <property type="evidence" value="ECO:0007669"/>
    <property type="project" value="UniProtKB-EC"/>
</dbReference>
<dbReference type="GO" id="GO:0042398">
    <property type="term" value="P:modified amino acid biosynthetic process"/>
    <property type="evidence" value="ECO:0007669"/>
    <property type="project" value="InterPro"/>
</dbReference>
<dbReference type="Gene3D" id="3.30.590.20">
    <property type="match status" value="1"/>
</dbReference>
<dbReference type="HAMAP" id="MF_01609">
    <property type="entry name" value="Glu_cys_ligase_2"/>
    <property type="match status" value="1"/>
</dbReference>
<dbReference type="InterPro" id="IPR050141">
    <property type="entry name" value="GCL_type2/YbdK_subfam"/>
</dbReference>
<dbReference type="InterPro" id="IPR006336">
    <property type="entry name" value="GCS2"/>
</dbReference>
<dbReference type="InterPro" id="IPR014746">
    <property type="entry name" value="Gln_synth/guanido_kin_cat_dom"/>
</dbReference>
<dbReference type="InterPro" id="IPR011793">
    <property type="entry name" value="YbdK"/>
</dbReference>
<dbReference type="NCBIfam" id="TIGR02050">
    <property type="entry name" value="gshA_cyan_rel"/>
    <property type="match status" value="1"/>
</dbReference>
<dbReference type="NCBIfam" id="NF010041">
    <property type="entry name" value="PRK13517.1-1"/>
    <property type="match status" value="1"/>
</dbReference>
<dbReference type="PANTHER" id="PTHR36510">
    <property type="entry name" value="GLUTAMATE--CYSTEINE LIGASE 2-RELATED"/>
    <property type="match status" value="1"/>
</dbReference>
<dbReference type="PANTHER" id="PTHR36510:SF1">
    <property type="entry name" value="GLUTAMATE--CYSTEINE LIGASE 2-RELATED"/>
    <property type="match status" value="1"/>
</dbReference>
<dbReference type="Pfam" id="PF04107">
    <property type="entry name" value="GCS2"/>
    <property type="match status" value="1"/>
</dbReference>
<dbReference type="SUPFAM" id="SSF55931">
    <property type="entry name" value="Glutamine synthetase/guanido kinase"/>
    <property type="match status" value="1"/>
</dbReference>